<feature type="initiator methionine" description="Removed" evidence="4">
    <location>
        <position position="1"/>
    </location>
</feature>
<feature type="chain" id="PRO_0000252685" description="Platelet-activating factor acetylhydrolase IB subunit alpha1">
    <location>
        <begin position="2"/>
        <end position="231"/>
    </location>
</feature>
<feature type="active site" evidence="5">
    <location>
        <position position="47"/>
    </location>
</feature>
<feature type="active site" evidence="5">
    <location>
        <position position="192"/>
    </location>
</feature>
<feature type="active site" evidence="5">
    <location>
        <position position="195"/>
    </location>
</feature>
<feature type="modified residue" description="N-acetylserine" evidence="4">
    <location>
        <position position="2"/>
    </location>
</feature>
<feature type="modified residue" description="Phosphoserine" evidence="4">
    <location>
        <position position="2"/>
    </location>
</feature>
<proteinExistence type="evidence at transcript level"/>
<keyword id="KW-0007">Acetylation</keyword>
<keyword id="KW-0963">Cytoplasm</keyword>
<keyword id="KW-0378">Hydrolase</keyword>
<keyword id="KW-0442">Lipid degradation</keyword>
<keyword id="KW-0443">Lipid metabolism</keyword>
<keyword id="KW-0597">Phosphoprotein</keyword>
<keyword id="KW-1185">Reference proteome</keyword>
<sequence length="231" mass="25748">MSGEENPASKPTPVQDVQGDGRWMSLHHRFVADSKDKEPEVVFIGDSLVQLMHQCEIWRELFSPLHALNFGIGGDGTQHVLWRLENGELEHIRPKIVVVWVGTNNHGHTAEQVTGGIKAIVQLVNERQPQARVVVLDLLPRGQHPNPLREKNQRVNELVRAALAGHPRAHFLDADPGFVHSDGTISHHDMYDYLHLSRLGYAPVCRALHSLLLRLLAQDQGQGAPLLDPAP</sequence>
<evidence type="ECO:0000250" key="1"/>
<evidence type="ECO:0000250" key="2">
    <source>
        <dbReference type="UniProtKB" id="P43034"/>
    </source>
</evidence>
<evidence type="ECO:0000250" key="3">
    <source>
        <dbReference type="UniProtKB" id="P68402"/>
    </source>
</evidence>
<evidence type="ECO:0000250" key="4">
    <source>
        <dbReference type="UniProtKB" id="Q15102"/>
    </source>
</evidence>
<evidence type="ECO:0000250" key="5">
    <source>
        <dbReference type="UniProtKB" id="Q29460"/>
    </source>
</evidence>
<evidence type="ECO:0000250" key="6">
    <source>
        <dbReference type="UniProtKB" id="Q61205"/>
    </source>
</evidence>
<evidence type="ECO:0000305" key="7"/>
<dbReference type="EC" id="3.1.1.47" evidence="5"/>
<dbReference type="EMBL" id="CR860358">
    <property type="protein sequence ID" value="CAH92489.1"/>
    <property type="molecule type" value="mRNA"/>
</dbReference>
<dbReference type="RefSeq" id="NP_001126468.1">
    <property type="nucleotide sequence ID" value="NM_001132996.1"/>
</dbReference>
<dbReference type="RefSeq" id="XP_009230936.1">
    <property type="nucleotide sequence ID" value="XM_009232661.1"/>
</dbReference>
<dbReference type="SMR" id="Q5R6X1"/>
<dbReference type="FunCoup" id="Q5R6X1">
    <property type="interactions" value="485"/>
</dbReference>
<dbReference type="STRING" id="9601.ENSPPYP00000011239"/>
<dbReference type="GeneID" id="100173455"/>
<dbReference type="KEGG" id="pon:100173455"/>
<dbReference type="CTD" id="5050"/>
<dbReference type="eggNOG" id="KOG1388">
    <property type="taxonomic scope" value="Eukaryota"/>
</dbReference>
<dbReference type="InParanoid" id="Q5R6X1"/>
<dbReference type="OrthoDB" id="505607at2759"/>
<dbReference type="Proteomes" id="UP000001595">
    <property type="component" value="Unplaced"/>
</dbReference>
<dbReference type="GO" id="GO:0008247">
    <property type="term" value="C:1-alkyl-2-acetylglycerophosphocholine esterase complex"/>
    <property type="evidence" value="ECO:0000250"/>
    <property type="project" value="UniProtKB"/>
</dbReference>
<dbReference type="GO" id="GO:0005737">
    <property type="term" value="C:cytoplasm"/>
    <property type="evidence" value="ECO:0007669"/>
    <property type="project" value="UniProtKB-SubCell"/>
</dbReference>
<dbReference type="GO" id="GO:0003847">
    <property type="term" value="F:1-alkyl-2-acetylglycerophosphocholine esterase activity"/>
    <property type="evidence" value="ECO:0000250"/>
    <property type="project" value="UniProtKB"/>
</dbReference>
<dbReference type="GO" id="GO:0047179">
    <property type="term" value="F:platelet-activating factor acetyltransferase activity"/>
    <property type="evidence" value="ECO:0007669"/>
    <property type="project" value="TreeGrafter"/>
</dbReference>
<dbReference type="GO" id="GO:0046982">
    <property type="term" value="F:protein heterodimerization activity"/>
    <property type="evidence" value="ECO:0000250"/>
    <property type="project" value="UniProtKB"/>
</dbReference>
<dbReference type="GO" id="GO:0042803">
    <property type="term" value="F:protein homodimerization activity"/>
    <property type="evidence" value="ECO:0000250"/>
    <property type="project" value="UniProtKB"/>
</dbReference>
<dbReference type="GO" id="GO:0016042">
    <property type="term" value="P:lipid catabolic process"/>
    <property type="evidence" value="ECO:0007669"/>
    <property type="project" value="UniProtKB-KW"/>
</dbReference>
<dbReference type="CDD" id="cd01820">
    <property type="entry name" value="PAF_acetylesterase_like"/>
    <property type="match status" value="1"/>
</dbReference>
<dbReference type="FunFam" id="3.40.50.1110:FF:000004">
    <property type="entry name" value="Platelet-activating factor acetylhydrolase IB subunit beta"/>
    <property type="match status" value="1"/>
</dbReference>
<dbReference type="Gene3D" id="3.40.50.1110">
    <property type="entry name" value="SGNH hydrolase"/>
    <property type="match status" value="1"/>
</dbReference>
<dbReference type="InterPro" id="IPR013830">
    <property type="entry name" value="SGNH_hydro"/>
</dbReference>
<dbReference type="InterPro" id="IPR036514">
    <property type="entry name" value="SGNH_hydro_sf"/>
</dbReference>
<dbReference type="PANTHER" id="PTHR11852">
    <property type="entry name" value="PLATELET-ACTIVATING FACTOR ACETYLHYDROLASE"/>
    <property type="match status" value="1"/>
</dbReference>
<dbReference type="PANTHER" id="PTHR11852:SF2">
    <property type="entry name" value="PLATELET-ACTIVATING FACTOR ACETYLHYDROLASE IB SUBUNIT ALPHA1"/>
    <property type="match status" value="1"/>
</dbReference>
<dbReference type="Pfam" id="PF13472">
    <property type="entry name" value="Lipase_GDSL_2"/>
    <property type="match status" value="1"/>
</dbReference>
<dbReference type="SUPFAM" id="SSF52266">
    <property type="entry name" value="SGNH hydrolase"/>
    <property type="match status" value="1"/>
</dbReference>
<organism>
    <name type="scientific">Pongo abelii</name>
    <name type="common">Sumatran orangutan</name>
    <name type="synonym">Pongo pygmaeus abelii</name>
    <dbReference type="NCBI Taxonomy" id="9601"/>
    <lineage>
        <taxon>Eukaryota</taxon>
        <taxon>Metazoa</taxon>
        <taxon>Chordata</taxon>
        <taxon>Craniata</taxon>
        <taxon>Vertebrata</taxon>
        <taxon>Euteleostomi</taxon>
        <taxon>Mammalia</taxon>
        <taxon>Eutheria</taxon>
        <taxon>Euarchontoglires</taxon>
        <taxon>Primates</taxon>
        <taxon>Haplorrhini</taxon>
        <taxon>Catarrhini</taxon>
        <taxon>Hominidae</taxon>
        <taxon>Pongo</taxon>
    </lineage>
</organism>
<accession>Q5R6X1</accession>
<name>PA1B3_PONAB</name>
<gene>
    <name evidence="4" type="primary">PAFAH1B3</name>
    <name type="synonym">PAFAHG</name>
</gene>
<reference key="1">
    <citation type="submission" date="2004-11" db="EMBL/GenBank/DDBJ databases">
        <authorList>
            <consortium name="The German cDNA consortium"/>
        </authorList>
    </citation>
    <scope>NUCLEOTIDE SEQUENCE [LARGE SCALE MRNA]</scope>
    <source>
        <tissue>Brain cortex</tissue>
    </source>
</reference>
<protein>
    <recommendedName>
        <fullName evidence="4">Platelet-activating factor acetylhydrolase IB subunit alpha1</fullName>
        <ecNumber evidence="5">3.1.1.47</ecNumber>
    </recommendedName>
    <alternativeName>
        <fullName>PAF acetylhydrolase 29 kDa subunit</fullName>
        <shortName>PAF-AH 29 kDa subunit</shortName>
    </alternativeName>
    <alternativeName>
        <fullName>PAF-AH subunit gamma</fullName>
        <shortName>PAFAH subunit gamma</shortName>
    </alternativeName>
</protein>
<comment type="function">
    <text evidence="5">Alpha1 catalytic subunit of the cytosolic type I platelet-activating factor (PAF) acetylhydrolase (PAF-AH (I)) heterotetrameric enzyme that catalyzes the hydrolyze of the acetyl group at the sn-2 position of PAF and its analogs and modulates the action of PAF. The activity and substrate specificity of PAF-AH (I) are affected by its subunit composition. Both alpha1/alpha1 homodimer (PAFAH1B3/PAFAH1B3 homodimer) and alpha1/alpha2 heterodimer(PAFAH1B3/PAFAH1B2 heterodimer) hydrolyze 1-O-alkyl-2-acetyl-sn-glycero-3-phosphoric acid (AAGPA) more efficiently than PAF, but they have little hydrolytic activity towards 1-O-alkyl-2-acetyl-sn-glycero-3-phosphorylethanolamine (AAGPE). Plays an important role during the development of brain.</text>
</comment>
<comment type="catalytic activity">
    <reaction evidence="5">
        <text>a 1-O-alkyl-2-acetyl-sn-glycero-3-phosphocholine + H2O = a 1-O-alkyl-sn-glycero-3-phosphocholine + acetate + H(+)</text>
        <dbReference type="Rhea" id="RHEA:17777"/>
        <dbReference type="ChEBI" id="CHEBI:15377"/>
        <dbReference type="ChEBI" id="CHEBI:15378"/>
        <dbReference type="ChEBI" id="CHEBI:30089"/>
        <dbReference type="ChEBI" id="CHEBI:30909"/>
        <dbReference type="ChEBI" id="CHEBI:36707"/>
        <dbReference type="EC" id="3.1.1.47"/>
    </reaction>
    <physiologicalReaction direction="left-to-right" evidence="5">
        <dbReference type="Rhea" id="RHEA:17778"/>
    </physiologicalReaction>
</comment>
<comment type="catalytic activity">
    <reaction evidence="5">
        <text>1-O-hexadecyl-2-acetyl-sn-glycero-3-phosphocholine + H2O = 1-O-hexadecyl-sn-glycero-3-phosphocholine + acetate + H(+)</text>
        <dbReference type="Rhea" id="RHEA:40479"/>
        <dbReference type="ChEBI" id="CHEBI:15377"/>
        <dbReference type="ChEBI" id="CHEBI:15378"/>
        <dbReference type="ChEBI" id="CHEBI:30089"/>
        <dbReference type="ChEBI" id="CHEBI:44811"/>
        <dbReference type="ChEBI" id="CHEBI:64496"/>
    </reaction>
    <physiologicalReaction direction="left-to-right" evidence="5">
        <dbReference type="Rhea" id="RHEA:40480"/>
    </physiologicalReaction>
</comment>
<comment type="catalytic activity">
    <reaction evidence="5">
        <text>1-O-hexadecyl-2-acetyl-sn-glycero-3-phosphate + H2O = 1-O-hexadecyl-sn-glycero-3-phosphate + acetate + H(+)</text>
        <dbReference type="Rhea" id="RHEA:41704"/>
        <dbReference type="ChEBI" id="CHEBI:15377"/>
        <dbReference type="ChEBI" id="CHEBI:15378"/>
        <dbReference type="ChEBI" id="CHEBI:30089"/>
        <dbReference type="ChEBI" id="CHEBI:77580"/>
        <dbReference type="ChEBI" id="CHEBI:78385"/>
    </reaction>
    <physiologicalReaction direction="left-to-right" evidence="5">
        <dbReference type="Rhea" id="RHEA:41705"/>
    </physiologicalReaction>
</comment>
<comment type="activity regulation">
    <text evidence="5">Beta subunit (PAFAH1B1) inhibits the acetylhydrolase activity of the alpha1/alpha1 catalytic homodimer.</text>
</comment>
<comment type="subunit">
    <text evidence="5 6">Forms a catalytic dimer which is either homodimer (alpha1/alpha1 homodimer) or heterodimer with PAFAH1B2 (alpha1/alpha2 heterodimer). Component of the cytosolic (PAF-AH (I)) heterotetrameric enzyme, which is composed of PAFAH1B1 (beta), PAFAH1B2 (alpha2) and PAFAH1B3 (alpha1) subunits. The catalytic activity of the enzyme resides in the alpha1 (PAFAH1B3) and alpha2 (PAFAH1B2) subunits, whereas the beta subunit (PAFAH1B1) has regulatory activity. Trimer formation is not essential for the catalytic activity (By similarity). Interacts with VLDLR; this interaction may modulate the Reelin pathway (By similarity).</text>
</comment>
<comment type="subcellular location">
    <subcellularLocation>
        <location evidence="1">Cytoplasm</location>
    </subcellularLocation>
</comment>
<comment type="miscellaneous">
    <text evidence="2 3 4 5">Originally the subunits of the type I platelet-activating factor (PAF) acetylhydrolase was named alpha (PAFAH1B1), beta (PAFAH1B2) and gamma (PAFAH1B3) (By similarity). Now these subunits have been renamed beta (PAFAH1B1), alpha2 (PAFAH1B2) and alpha1 (PAFAH1B3) respectively (By similarity).</text>
</comment>
<comment type="similarity">
    <text evidence="7">Belongs to the 'GDSL' lipolytic enzyme family. Platelet-activating factor acetylhydrolase IB beta/gamma subunits subfamily.</text>
</comment>